<organism>
    <name type="scientific">Agrobacterium fabrum (strain C58 / ATCC 33970)</name>
    <name type="common">Agrobacterium tumefaciens (strain C58)</name>
    <dbReference type="NCBI Taxonomy" id="176299"/>
    <lineage>
        <taxon>Bacteria</taxon>
        <taxon>Pseudomonadati</taxon>
        <taxon>Pseudomonadota</taxon>
        <taxon>Alphaproteobacteria</taxon>
        <taxon>Hyphomicrobiales</taxon>
        <taxon>Rhizobiaceae</taxon>
        <taxon>Rhizobium/Agrobacterium group</taxon>
        <taxon>Agrobacterium</taxon>
        <taxon>Agrobacterium tumefaciens complex</taxon>
    </lineage>
</organism>
<evidence type="ECO:0000250" key="1"/>
<evidence type="ECO:0000255" key="2"/>
<evidence type="ECO:0000255" key="3">
    <source>
        <dbReference type="PROSITE-ProRule" id="PRU00102"/>
    </source>
</evidence>
<evidence type="ECO:0000255" key="4">
    <source>
        <dbReference type="PROSITE-ProRule" id="PRU00107"/>
    </source>
</evidence>
<evidence type="ECO:0000256" key="5">
    <source>
        <dbReference type="SAM" id="MobiDB-lite"/>
    </source>
</evidence>
<evidence type="ECO:0000305" key="6"/>
<dbReference type="EC" id="2.7.13.3"/>
<dbReference type="EMBL" id="L18860">
    <property type="protein sequence ID" value="AAA03552.1"/>
    <property type="status" value="ALT_FRAME"/>
    <property type="molecule type" value="Unassigned_DNA"/>
</dbReference>
<dbReference type="EMBL" id="AE007869">
    <property type="protein sequence ID" value="AAK85857.1"/>
    <property type="molecule type" value="Genomic_DNA"/>
</dbReference>
<dbReference type="PIR" id="A49902">
    <property type="entry name" value="A49902"/>
</dbReference>
<dbReference type="PIR" id="AB2581">
    <property type="entry name" value="AB2581"/>
</dbReference>
<dbReference type="PIR" id="H97362">
    <property type="entry name" value="H97362"/>
</dbReference>
<dbReference type="RefSeq" id="NP_353072.1">
    <property type="nucleotide sequence ID" value="NC_003062.2"/>
</dbReference>
<dbReference type="RefSeq" id="WP_006311105.1">
    <property type="nucleotide sequence ID" value="NC_003062.2"/>
</dbReference>
<dbReference type="SMR" id="Q07737"/>
<dbReference type="STRING" id="176299.Atu0033"/>
<dbReference type="EnsemblBacteria" id="AAK85857">
    <property type="protein sequence ID" value="AAK85857"/>
    <property type="gene ID" value="Atu0033"/>
</dbReference>
<dbReference type="GeneID" id="1132071"/>
<dbReference type="KEGG" id="atu:Atu0033"/>
<dbReference type="PATRIC" id="fig|176299.10.peg.33"/>
<dbReference type="eggNOG" id="COG0642">
    <property type="taxonomic scope" value="Bacteria"/>
</dbReference>
<dbReference type="HOGENOM" id="CLU_000445_89_6_5"/>
<dbReference type="OrthoDB" id="9805942at2"/>
<dbReference type="PhylomeDB" id="Q07737"/>
<dbReference type="BioCyc" id="AGRO:ATU0033-MONOMER"/>
<dbReference type="BRENDA" id="2.7.13.3">
    <property type="organism ID" value="200"/>
</dbReference>
<dbReference type="Proteomes" id="UP000000813">
    <property type="component" value="Chromosome circular"/>
</dbReference>
<dbReference type="GO" id="GO:0005886">
    <property type="term" value="C:plasma membrane"/>
    <property type="evidence" value="ECO:0007669"/>
    <property type="project" value="UniProtKB-SubCell"/>
</dbReference>
<dbReference type="GO" id="GO:0005524">
    <property type="term" value="F:ATP binding"/>
    <property type="evidence" value="ECO:0007669"/>
    <property type="project" value="UniProtKB-KW"/>
</dbReference>
<dbReference type="GO" id="GO:0000155">
    <property type="term" value="F:phosphorelay sensor kinase activity"/>
    <property type="evidence" value="ECO:0007669"/>
    <property type="project" value="InterPro"/>
</dbReference>
<dbReference type="CDD" id="cd06225">
    <property type="entry name" value="HAMP"/>
    <property type="match status" value="1"/>
</dbReference>
<dbReference type="CDD" id="cd00082">
    <property type="entry name" value="HisKA"/>
    <property type="match status" value="1"/>
</dbReference>
<dbReference type="Gene3D" id="1.10.287.130">
    <property type="match status" value="1"/>
</dbReference>
<dbReference type="Gene3D" id="6.10.340.10">
    <property type="match status" value="1"/>
</dbReference>
<dbReference type="Gene3D" id="3.30.565.10">
    <property type="entry name" value="Histidine kinase-like ATPase, C-terminal domain"/>
    <property type="match status" value="1"/>
</dbReference>
<dbReference type="InterPro" id="IPR003660">
    <property type="entry name" value="HAMP_dom"/>
</dbReference>
<dbReference type="InterPro" id="IPR036890">
    <property type="entry name" value="HATPase_C_sf"/>
</dbReference>
<dbReference type="InterPro" id="IPR005467">
    <property type="entry name" value="His_kinase_dom"/>
</dbReference>
<dbReference type="InterPro" id="IPR003661">
    <property type="entry name" value="HisK_dim/P_dom"/>
</dbReference>
<dbReference type="InterPro" id="IPR036097">
    <property type="entry name" value="HisK_dim/P_sf"/>
</dbReference>
<dbReference type="InterPro" id="IPR025908">
    <property type="entry name" value="Sensor_TM1"/>
</dbReference>
<dbReference type="InterPro" id="IPR004358">
    <property type="entry name" value="Sig_transdc_His_kin-like_C"/>
</dbReference>
<dbReference type="InterPro" id="IPR025919">
    <property type="entry name" value="Stimulus_sens_dom"/>
</dbReference>
<dbReference type="InterPro" id="IPR050428">
    <property type="entry name" value="TCS_sensor_his_kinase"/>
</dbReference>
<dbReference type="PANTHER" id="PTHR45436:SF5">
    <property type="entry name" value="SENSOR HISTIDINE KINASE TRCS"/>
    <property type="match status" value="1"/>
</dbReference>
<dbReference type="PANTHER" id="PTHR45436">
    <property type="entry name" value="SENSOR HISTIDINE KINASE YKOH"/>
    <property type="match status" value="1"/>
</dbReference>
<dbReference type="Pfam" id="PF00672">
    <property type="entry name" value="HAMP"/>
    <property type="match status" value="1"/>
</dbReference>
<dbReference type="Pfam" id="PF02518">
    <property type="entry name" value="HATPase_c"/>
    <property type="match status" value="1"/>
</dbReference>
<dbReference type="Pfam" id="PF00512">
    <property type="entry name" value="HisKA"/>
    <property type="match status" value="1"/>
</dbReference>
<dbReference type="Pfam" id="PF13755">
    <property type="entry name" value="Sensor_TM1"/>
    <property type="match status" value="1"/>
</dbReference>
<dbReference type="Pfam" id="PF13756">
    <property type="entry name" value="Stimulus_sens_1"/>
    <property type="match status" value="1"/>
</dbReference>
<dbReference type="PRINTS" id="PR00344">
    <property type="entry name" value="BCTRLSENSOR"/>
</dbReference>
<dbReference type="SMART" id="SM00304">
    <property type="entry name" value="HAMP"/>
    <property type="match status" value="1"/>
</dbReference>
<dbReference type="SMART" id="SM00387">
    <property type="entry name" value="HATPase_c"/>
    <property type="match status" value="1"/>
</dbReference>
<dbReference type="SMART" id="SM00388">
    <property type="entry name" value="HisKA"/>
    <property type="match status" value="1"/>
</dbReference>
<dbReference type="SUPFAM" id="SSF55874">
    <property type="entry name" value="ATPase domain of HSP90 chaperone/DNA topoisomerase II/histidine kinase"/>
    <property type="match status" value="1"/>
</dbReference>
<dbReference type="SUPFAM" id="SSF47384">
    <property type="entry name" value="Homodimeric domain of signal transducing histidine kinase"/>
    <property type="match status" value="1"/>
</dbReference>
<dbReference type="PROSITE" id="PS50885">
    <property type="entry name" value="HAMP"/>
    <property type="match status" value="1"/>
</dbReference>
<dbReference type="PROSITE" id="PS50109">
    <property type="entry name" value="HIS_KIN"/>
    <property type="match status" value="1"/>
</dbReference>
<accession>Q07737</accession>
<keyword id="KW-0067">ATP-binding</keyword>
<keyword id="KW-0997">Cell inner membrane</keyword>
<keyword id="KW-1003">Cell membrane</keyword>
<keyword id="KW-0418">Kinase</keyword>
<keyword id="KW-0472">Membrane</keyword>
<keyword id="KW-0547">Nucleotide-binding</keyword>
<keyword id="KW-0597">Phosphoprotein</keyword>
<keyword id="KW-1185">Reference proteome</keyword>
<keyword id="KW-0808">Transferase</keyword>
<keyword id="KW-0812">Transmembrane</keyword>
<keyword id="KW-1133">Transmembrane helix</keyword>
<keyword id="KW-0902">Two-component regulatory system</keyword>
<proteinExistence type="inferred from homology"/>
<comment type="function">
    <text evidence="6">Member of a two-component regulatory system ChvG/ChvI. Activates ChvI by phosphorylation (Potential).</text>
</comment>
<comment type="catalytic activity">
    <reaction>
        <text>ATP + protein L-histidine = ADP + protein N-phospho-L-histidine.</text>
        <dbReference type="EC" id="2.7.13.3"/>
    </reaction>
</comment>
<comment type="subcellular location">
    <subcellularLocation>
        <location evidence="6">Cell inner membrane</location>
        <topology evidence="6">Multi-pass membrane protein</topology>
    </subcellularLocation>
</comment>
<comment type="sequence caution" evidence="6">
    <conflict type="frameshift">
        <sequence resource="EMBL-CDS" id="AAA03552"/>
    </conflict>
</comment>
<sequence>MLKKTPETVSDSDDAEERGSERRHRIHPLTIIRRIFGNAVFSSLTRRILFFNVAATVVLVGGILYLNQFREGLIDARVESLLTQGEIIAGAVSASASVDTNSITINPEKLLELQAGQSITPAPNDEDLSFPINPERVAPVLRRLISPTRTRARLFDADANLLLDSRHLYSRGQVLRFDLPPVTPETQTWGDWFTSMFNRMLQPSSLPQYKEAPGGDGSIYPEVMNALTGVRGAVVRVTEKGELIVSVAVPVQRFRAVLGVLLLSTQAGDIDKIVHAERLAIMRVFGIATLVNIVLSLLLSSTIATPLRRLSAAAIRVRRGARTREEIPDFSARQDEIGNLSIALREMTTALYDRIDAIESFAADVSHELKNPLTSLRSAVETLPRAKTEESKQRLTEIIFHDVRRLDRLISDISDASRLDAELARADASPLDLDVLMKGLVDISRQISTKKKSVAIDYVADRKAGAKTSFVVNGHDLRIGQIVTNLIENARSFVSEESGRITVRLSRHKDRCIVQVEDNGPGIQAEDIDRIFERFYTDRPASEGFGQNSGLGLSISRQIAEAHGGSLRAENVVDKYGVISGARFTLSLPAAETHER</sequence>
<name>CHVG_AGRFC</name>
<protein>
    <recommendedName>
        <fullName>Sensor protein ChvG</fullName>
        <ecNumber>2.7.13.3</ecNumber>
    </recommendedName>
</protein>
<gene>
    <name type="primary">chvG</name>
    <name type="ordered locus">Atu0033</name>
    <name type="ORF">AGR_C_52</name>
</gene>
<reference key="1">
    <citation type="journal article" date="1993" name="J. Bacteriol.">
        <title>A chromosomally encoded two-component sensory transduction system is required for virulence of Agrobacterium tumefaciens.</title>
        <authorList>
            <person name="Charles T.C."/>
            <person name="Nester E.W."/>
        </authorList>
    </citation>
    <scope>NUCLEOTIDE SEQUENCE [GENOMIC DNA]</scope>
</reference>
<reference key="2">
    <citation type="journal article" date="2001" name="Science">
        <title>The genome of the natural genetic engineer Agrobacterium tumefaciens C58.</title>
        <authorList>
            <person name="Wood D.W."/>
            <person name="Setubal J.C."/>
            <person name="Kaul R."/>
            <person name="Monks D.E."/>
            <person name="Kitajima J.P."/>
            <person name="Okura V.K."/>
            <person name="Zhou Y."/>
            <person name="Chen L."/>
            <person name="Wood G.E."/>
            <person name="Almeida N.F. Jr."/>
            <person name="Woo L."/>
            <person name="Chen Y."/>
            <person name="Paulsen I.T."/>
            <person name="Eisen J.A."/>
            <person name="Karp P.D."/>
            <person name="Bovee D. Sr."/>
            <person name="Chapman P."/>
            <person name="Clendenning J."/>
            <person name="Deatherage G."/>
            <person name="Gillet W."/>
            <person name="Grant C."/>
            <person name="Kutyavin T."/>
            <person name="Levy R."/>
            <person name="Li M.-J."/>
            <person name="McClelland E."/>
            <person name="Palmieri A."/>
            <person name="Raymond C."/>
            <person name="Rouse G."/>
            <person name="Saenphimmachak C."/>
            <person name="Wu Z."/>
            <person name="Romero P."/>
            <person name="Gordon D."/>
            <person name="Zhang S."/>
            <person name="Yoo H."/>
            <person name="Tao Y."/>
            <person name="Biddle P."/>
            <person name="Jung M."/>
            <person name="Krespan W."/>
            <person name="Perry M."/>
            <person name="Gordon-Kamm B."/>
            <person name="Liao L."/>
            <person name="Kim S."/>
            <person name="Hendrick C."/>
            <person name="Zhao Z.-Y."/>
            <person name="Dolan M."/>
            <person name="Chumley F."/>
            <person name="Tingey S.V."/>
            <person name="Tomb J.-F."/>
            <person name="Gordon M.P."/>
            <person name="Olson M.V."/>
            <person name="Nester E.W."/>
        </authorList>
    </citation>
    <scope>NUCLEOTIDE SEQUENCE [LARGE SCALE GENOMIC DNA]</scope>
    <source>
        <strain>C58 / ATCC 33970</strain>
    </source>
</reference>
<reference key="3">
    <citation type="journal article" date="2001" name="Science">
        <title>Genome sequence of the plant pathogen and biotechnology agent Agrobacterium tumefaciens C58.</title>
        <authorList>
            <person name="Goodner B."/>
            <person name="Hinkle G."/>
            <person name="Gattung S."/>
            <person name="Miller N."/>
            <person name="Blanchard M."/>
            <person name="Qurollo B."/>
            <person name="Goldman B.S."/>
            <person name="Cao Y."/>
            <person name="Askenazi M."/>
            <person name="Halling C."/>
            <person name="Mullin L."/>
            <person name="Houmiel K."/>
            <person name="Gordon J."/>
            <person name="Vaudin M."/>
            <person name="Iartchouk O."/>
            <person name="Epp A."/>
            <person name="Liu F."/>
            <person name="Wollam C."/>
            <person name="Allinger M."/>
            <person name="Doughty D."/>
            <person name="Scott C."/>
            <person name="Lappas C."/>
            <person name="Markelz B."/>
            <person name="Flanagan C."/>
            <person name="Crowell C."/>
            <person name="Gurson J."/>
            <person name="Lomo C."/>
            <person name="Sear C."/>
            <person name="Strub G."/>
            <person name="Cielo C."/>
            <person name="Slater S."/>
        </authorList>
    </citation>
    <scope>NUCLEOTIDE SEQUENCE [LARGE SCALE GENOMIC DNA]</scope>
    <source>
        <strain>C58 / ATCC 33970</strain>
    </source>
</reference>
<feature type="chain" id="PRO_0000074720" description="Sensor protein ChvG">
    <location>
        <begin position="1"/>
        <end position="596"/>
    </location>
</feature>
<feature type="topological domain" description="Cytoplasmic" evidence="2">
    <location>
        <begin position="1"/>
        <end position="47"/>
    </location>
</feature>
<feature type="transmembrane region" description="Helical" evidence="2">
    <location>
        <begin position="48"/>
        <end position="68"/>
    </location>
</feature>
<feature type="topological domain" description="Periplasmic" evidence="2">
    <location>
        <begin position="69"/>
        <end position="283"/>
    </location>
</feature>
<feature type="transmembrane region" description="Helical" evidence="2">
    <location>
        <begin position="284"/>
        <end position="304"/>
    </location>
</feature>
<feature type="topological domain" description="Cytoplasmic" evidence="2">
    <location>
        <begin position="305"/>
        <end position="596"/>
    </location>
</feature>
<feature type="domain" description="HAMP" evidence="3">
    <location>
        <begin position="301"/>
        <end position="356"/>
    </location>
</feature>
<feature type="domain" description="Histidine kinase" evidence="4">
    <location>
        <begin position="364"/>
        <end position="592"/>
    </location>
</feature>
<feature type="region of interest" description="Disordered" evidence="5">
    <location>
        <begin position="1"/>
        <end position="22"/>
    </location>
</feature>
<feature type="modified residue" description="Phosphohistidine" evidence="1">
    <location>
        <position position="367"/>
    </location>
</feature>
<feature type="sequence conflict" description="In Ref. 1; AAA03552." evidence="6" ref="1">
    <original>A</original>
    <variation>R</variation>
    <location>
        <position position="94"/>
    </location>
</feature>
<feature type="sequence conflict" description="In Ref. 1." evidence="6" ref="1">
    <original>R</original>
    <variation>P</variation>
    <location>
        <position position="236"/>
    </location>
</feature>
<feature type="sequence conflict" description="In Ref. 1; AAA03552." evidence="6" ref="1">
    <original>AIRVR</original>
    <variation>RSGA</variation>
    <location>
        <begin position="314"/>
        <end position="318"/>
    </location>
</feature>